<comment type="similarity">
    <text evidence="1">Belongs to the bacterial ribosomal protein bL32 family.</text>
</comment>
<organism>
    <name type="scientific">Latilactobacillus sakei subsp. sakei (strain 23K)</name>
    <name type="common">Lactobacillus sakei subsp. sakei</name>
    <dbReference type="NCBI Taxonomy" id="314315"/>
    <lineage>
        <taxon>Bacteria</taxon>
        <taxon>Bacillati</taxon>
        <taxon>Bacillota</taxon>
        <taxon>Bacilli</taxon>
        <taxon>Lactobacillales</taxon>
        <taxon>Lactobacillaceae</taxon>
        <taxon>Latilactobacillus</taxon>
    </lineage>
</organism>
<keyword id="KW-1185">Reference proteome</keyword>
<keyword id="KW-0687">Ribonucleoprotein</keyword>
<keyword id="KW-0689">Ribosomal protein</keyword>
<protein>
    <recommendedName>
        <fullName evidence="1">Large ribosomal subunit protein bL32</fullName>
    </recommendedName>
    <alternativeName>
        <fullName evidence="2">50S ribosomal protein L32</fullName>
    </alternativeName>
</protein>
<accession>Q38WU0</accession>
<proteinExistence type="inferred from homology"/>
<name>RL32_LATSS</name>
<sequence length="60" mass="6856">MAVPARRTSKTKKRMRRGHIKLNTPNVQFDATNGEYRVSHRVSPKGFYKGEQVVTPKAND</sequence>
<evidence type="ECO:0000255" key="1">
    <source>
        <dbReference type="HAMAP-Rule" id="MF_00340"/>
    </source>
</evidence>
<evidence type="ECO:0000305" key="2"/>
<reference key="1">
    <citation type="journal article" date="2005" name="Nat. Biotechnol.">
        <title>The complete genome sequence of the meat-borne lactic acid bacterium Lactobacillus sakei 23K.</title>
        <authorList>
            <person name="Chaillou S."/>
            <person name="Champomier-Verges M.-C."/>
            <person name="Cornet M."/>
            <person name="Crutz-Le Coq A.-M."/>
            <person name="Dudez A.-M."/>
            <person name="Martin V."/>
            <person name="Beaufils S."/>
            <person name="Darbon-Rongere E."/>
            <person name="Bossy R."/>
            <person name="Loux V."/>
            <person name="Zagorec M."/>
        </authorList>
    </citation>
    <scope>NUCLEOTIDE SEQUENCE [LARGE SCALE GENOMIC DNA]</scope>
    <source>
        <strain>23K</strain>
    </source>
</reference>
<gene>
    <name evidence="1" type="primary">rpmF</name>
    <name type="ordered locus">LCA_1039</name>
</gene>
<dbReference type="EMBL" id="CR936503">
    <property type="protein sequence ID" value="CAI55341.1"/>
    <property type="molecule type" value="Genomic_DNA"/>
</dbReference>
<dbReference type="RefSeq" id="WP_004270395.1">
    <property type="nucleotide sequence ID" value="NC_007576.1"/>
</dbReference>
<dbReference type="SMR" id="Q38WU0"/>
<dbReference type="STRING" id="314315.LCA_1039"/>
<dbReference type="GeneID" id="57133897"/>
<dbReference type="KEGG" id="lsa:LCA_1039"/>
<dbReference type="eggNOG" id="COG0333">
    <property type="taxonomic scope" value="Bacteria"/>
</dbReference>
<dbReference type="HOGENOM" id="CLU_129084_2_1_9"/>
<dbReference type="OrthoDB" id="9812874at2"/>
<dbReference type="Proteomes" id="UP000002707">
    <property type="component" value="Chromosome"/>
</dbReference>
<dbReference type="GO" id="GO:0015934">
    <property type="term" value="C:large ribosomal subunit"/>
    <property type="evidence" value="ECO:0007669"/>
    <property type="project" value="InterPro"/>
</dbReference>
<dbReference type="GO" id="GO:0003735">
    <property type="term" value="F:structural constituent of ribosome"/>
    <property type="evidence" value="ECO:0007669"/>
    <property type="project" value="InterPro"/>
</dbReference>
<dbReference type="GO" id="GO:0006412">
    <property type="term" value="P:translation"/>
    <property type="evidence" value="ECO:0007669"/>
    <property type="project" value="UniProtKB-UniRule"/>
</dbReference>
<dbReference type="HAMAP" id="MF_00340">
    <property type="entry name" value="Ribosomal_bL32"/>
    <property type="match status" value="1"/>
</dbReference>
<dbReference type="InterPro" id="IPR002677">
    <property type="entry name" value="Ribosomal_bL32"/>
</dbReference>
<dbReference type="InterPro" id="IPR044957">
    <property type="entry name" value="Ribosomal_bL32_bact"/>
</dbReference>
<dbReference type="InterPro" id="IPR011332">
    <property type="entry name" value="Ribosomal_zn-bd"/>
</dbReference>
<dbReference type="NCBIfam" id="TIGR01031">
    <property type="entry name" value="rpmF_bact"/>
    <property type="match status" value="1"/>
</dbReference>
<dbReference type="PANTHER" id="PTHR35534">
    <property type="entry name" value="50S RIBOSOMAL PROTEIN L32"/>
    <property type="match status" value="1"/>
</dbReference>
<dbReference type="PANTHER" id="PTHR35534:SF1">
    <property type="entry name" value="LARGE RIBOSOMAL SUBUNIT PROTEIN BL32"/>
    <property type="match status" value="1"/>
</dbReference>
<dbReference type="Pfam" id="PF01783">
    <property type="entry name" value="Ribosomal_L32p"/>
    <property type="match status" value="1"/>
</dbReference>
<dbReference type="SUPFAM" id="SSF57829">
    <property type="entry name" value="Zn-binding ribosomal proteins"/>
    <property type="match status" value="1"/>
</dbReference>
<feature type="chain" id="PRO_0000225732" description="Large ribosomal subunit protein bL32">
    <location>
        <begin position="1"/>
        <end position="60"/>
    </location>
</feature>